<reference key="1">
    <citation type="journal article" date="1988" name="Proc. Natl. Acad. Sci. U.S.A.">
        <title>Amino acid sequence of heavy chain from Xenopus laevis IgM deduced from cDNA sequence: implications for evolution of immunoglobulin domains.</title>
        <authorList>
            <person name="Schwager J."/>
            <person name="Mikoryak C.A."/>
            <person name="Steiner L.A."/>
        </authorList>
    </citation>
    <scope>NUCLEOTIDE SEQUENCE [MRNA]</scope>
</reference>
<dbReference type="EMBL" id="M20484">
    <property type="protein sequence ID" value="AAA49774.1"/>
    <property type="status" value="ALT_TERM"/>
    <property type="molecule type" value="mRNA"/>
</dbReference>
<dbReference type="PIR" id="A31933">
    <property type="entry name" value="A31933"/>
</dbReference>
<dbReference type="SMR" id="P20956"/>
<dbReference type="Proteomes" id="UP000186698">
    <property type="component" value="Unplaced"/>
</dbReference>
<dbReference type="GO" id="GO:0005576">
    <property type="term" value="C:extracellular region"/>
    <property type="evidence" value="ECO:0007669"/>
    <property type="project" value="UniProtKB-ARBA"/>
</dbReference>
<dbReference type="GO" id="GO:0019814">
    <property type="term" value="C:immunoglobulin complex"/>
    <property type="evidence" value="ECO:0007669"/>
    <property type="project" value="UniProtKB-KW"/>
</dbReference>
<dbReference type="GO" id="GO:0003823">
    <property type="term" value="F:antigen binding"/>
    <property type="evidence" value="ECO:0000318"/>
    <property type="project" value="GO_Central"/>
</dbReference>
<dbReference type="GO" id="GO:0016064">
    <property type="term" value="P:immunoglobulin mediated immune response"/>
    <property type="evidence" value="ECO:0000318"/>
    <property type="project" value="GO_Central"/>
</dbReference>
<dbReference type="CDD" id="cd04981">
    <property type="entry name" value="IgV_H"/>
    <property type="match status" value="1"/>
</dbReference>
<dbReference type="FunFam" id="2.60.40.10:FF:001766">
    <property type="entry name" value="Pre-IgM VH-region (AA-18 to 120)"/>
    <property type="match status" value="1"/>
</dbReference>
<dbReference type="Gene3D" id="2.60.40.10">
    <property type="entry name" value="Immunoglobulins"/>
    <property type="match status" value="1"/>
</dbReference>
<dbReference type="InterPro" id="IPR007110">
    <property type="entry name" value="Ig-like_dom"/>
</dbReference>
<dbReference type="InterPro" id="IPR036179">
    <property type="entry name" value="Ig-like_dom_sf"/>
</dbReference>
<dbReference type="InterPro" id="IPR013783">
    <property type="entry name" value="Ig-like_fold"/>
</dbReference>
<dbReference type="InterPro" id="IPR003599">
    <property type="entry name" value="Ig_sub"/>
</dbReference>
<dbReference type="InterPro" id="IPR013106">
    <property type="entry name" value="Ig_V-set"/>
</dbReference>
<dbReference type="InterPro" id="IPR050199">
    <property type="entry name" value="IgHV"/>
</dbReference>
<dbReference type="PANTHER" id="PTHR23266">
    <property type="entry name" value="IMMUNOGLOBULIN HEAVY CHAIN"/>
    <property type="match status" value="1"/>
</dbReference>
<dbReference type="Pfam" id="PF07686">
    <property type="entry name" value="V-set"/>
    <property type="match status" value="1"/>
</dbReference>
<dbReference type="SMART" id="SM00409">
    <property type="entry name" value="IG"/>
    <property type="match status" value="1"/>
</dbReference>
<dbReference type="SMART" id="SM00406">
    <property type="entry name" value="IGv"/>
    <property type="match status" value="1"/>
</dbReference>
<dbReference type="SUPFAM" id="SSF48726">
    <property type="entry name" value="Immunoglobulin"/>
    <property type="match status" value="1"/>
</dbReference>
<dbReference type="PROSITE" id="PS50835">
    <property type="entry name" value="IG_LIKE"/>
    <property type="match status" value="1"/>
</dbReference>
<protein>
    <recommendedName>
        <fullName>Ig heavy chain V region XIG8</fullName>
    </recommendedName>
</protein>
<keyword id="KW-1064">Adaptive immunity</keyword>
<keyword id="KW-0391">Immunity</keyword>
<keyword id="KW-1280">Immunoglobulin</keyword>
<keyword id="KW-1185">Reference proteome</keyword>
<keyword id="KW-0732">Signal</keyword>
<accession>P20956</accession>
<sequence>GFGIFVIFMFFSPSCILSQTLQESGPGTVKPSESLRLTCTVSGFELTSYYVYWIRQPPRKTLEWIGVVRTDGSTAIADSLKNRVTITKDNGKKQVYLQMNGMEVKDTAMYYCTSTLAGTAGYFEHWGQGTMVTVTS</sequence>
<proteinExistence type="evidence at transcript level"/>
<organism>
    <name type="scientific">Xenopus laevis</name>
    <name type="common">African clawed frog</name>
    <dbReference type="NCBI Taxonomy" id="8355"/>
    <lineage>
        <taxon>Eukaryota</taxon>
        <taxon>Metazoa</taxon>
        <taxon>Chordata</taxon>
        <taxon>Craniata</taxon>
        <taxon>Vertebrata</taxon>
        <taxon>Euteleostomi</taxon>
        <taxon>Amphibia</taxon>
        <taxon>Batrachia</taxon>
        <taxon>Anura</taxon>
        <taxon>Pipoidea</taxon>
        <taxon>Pipidae</taxon>
        <taxon>Xenopodinae</taxon>
        <taxon>Xenopus</taxon>
        <taxon>Xenopus</taxon>
    </lineage>
</organism>
<name>HV01_XENLA</name>
<feature type="signal peptide">
    <location>
        <begin position="1" status="less than"/>
        <end position="18"/>
    </location>
</feature>
<feature type="chain" id="PRO_0000015210" description="Ig heavy chain V region XIG8">
    <location>
        <begin position="19"/>
        <end position="136"/>
    </location>
</feature>
<feature type="domain" description="Ig-like">
    <location>
        <begin position="19"/>
        <end position="128"/>
    </location>
</feature>
<feature type="non-terminal residue">
    <location>
        <position position="1"/>
    </location>
</feature>
<feature type="non-terminal residue">
    <location>
        <position position="136"/>
    </location>
</feature>